<proteinExistence type="evidence at protein level"/>
<accession>Q5HHB9</accession>
<dbReference type="EC" id="3.4.21.89"/>
<dbReference type="EMBL" id="CP000046">
    <property type="protein sequence ID" value="AAW37937.1"/>
    <property type="status" value="ALT_INIT"/>
    <property type="molecule type" value="Genomic_DNA"/>
</dbReference>
<dbReference type="PDB" id="4WVG">
    <property type="method" value="X-ray"/>
    <property type="resolution" value="2.05 A"/>
    <property type="chains" value="A=26-191"/>
</dbReference>
<dbReference type="PDB" id="4WVH">
    <property type="method" value="X-ray"/>
    <property type="resolution" value="2.10 A"/>
    <property type="chains" value="A=26-175"/>
</dbReference>
<dbReference type="PDB" id="4WVI">
    <property type="method" value="X-ray"/>
    <property type="resolution" value="1.90 A"/>
    <property type="chains" value="A=26-175"/>
</dbReference>
<dbReference type="PDB" id="4WVJ">
    <property type="method" value="X-ray"/>
    <property type="resolution" value="1.95 A"/>
    <property type="chains" value="A=26-175"/>
</dbReference>
<dbReference type="PDBsum" id="4WVG"/>
<dbReference type="PDBsum" id="4WVH"/>
<dbReference type="PDBsum" id="4WVI"/>
<dbReference type="PDBsum" id="4WVJ"/>
<dbReference type="SMR" id="Q5HHB9"/>
<dbReference type="MEROPS" id="S26.016"/>
<dbReference type="KEGG" id="sac:SACOL0969"/>
<dbReference type="HOGENOM" id="CLU_028723_5_0_9"/>
<dbReference type="EvolutionaryTrace" id="Q5HHB9"/>
<dbReference type="Proteomes" id="UP000000530">
    <property type="component" value="Chromosome"/>
</dbReference>
<dbReference type="GO" id="GO:0005886">
    <property type="term" value="C:plasma membrane"/>
    <property type="evidence" value="ECO:0007669"/>
    <property type="project" value="UniProtKB-SubCell"/>
</dbReference>
<dbReference type="GO" id="GO:0004252">
    <property type="term" value="F:serine-type endopeptidase activity"/>
    <property type="evidence" value="ECO:0007669"/>
    <property type="project" value="UniProtKB-EC"/>
</dbReference>
<dbReference type="GO" id="GO:0006465">
    <property type="term" value="P:signal peptide processing"/>
    <property type="evidence" value="ECO:0007669"/>
    <property type="project" value="InterPro"/>
</dbReference>
<dbReference type="CDD" id="cd06530">
    <property type="entry name" value="S26_SPase_I"/>
    <property type="match status" value="1"/>
</dbReference>
<dbReference type="FunFam" id="2.10.109.10:FF:000008">
    <property type="entry name" value="Signal peptidase I"/>
    <property type="match status" value="1"/>
</dbReference>
<dbReference type="Gene3D" id="2.10.109.10">
    <property type="entry name" value="Umud Fragment, subunit A"/>
    <property type="match status" value="1"/>
</dbReference>
<dbReference type="InterPro" id="IPR036286">
    <property type="entry name" value="LexA/Signal_pep-like_sf"/>
</dbReference>
<dbReference type="InterPro" id="IPR000223">
    <property type="entry name" value="Pept_S26A_signal_pept_1"/>
</dbReference>
<dbReference type="InterPro" id="IPR019758">
    <property type="entry name" value="Pept_S26A_signal_pept_1_CS"/>
</dbReference>
<dbReference type="InterPro" id="IPR019757">
    <property type="entry name" value="Pept_S26A_signal_pept_1_Lys-AS"/>
</dbReference>
<dbReference type="InterPro" id="IPR019756">
    <property type="entry name" value="Pept_S26A_signal_pept_1_Ser-AS"/>
</dbReference>
<dbReference type="InterPro" id="IPR019533">
    <property type="entry name" value="Peptidase_S26"/>
</dbReference>
<dbReference type="NCBIfam" id="TIGR02227">
    <property type="entry name" value="sigpep_I_bact"/>
    <property type="match status" value="1"/>
</dbReference>
<dbReference type="PANTHER" id="PTHR43390:SF1">
    <property type="entry name" value="CHLOROPLAST PROCESSING PEPTIDASE"/>
    <property type="match status" value="1"/>
</dbReference>
<dbReference type="PANTHER" id="PTHR43390">
    <property type="entry name" value="SIGNAL PEPTIDASE I"/>
    <property type="match status" value="1"/>
</dbReference>
<dbReference type="Pfam" id="PF10502">
    <property type="entry name" value="Peptidase_S26"/>
    <property type="match status" value="1"/>
</dbReference>
<dbReference type="PRINTS" id="PR00727">
    <property type="entry name" value="LEADERPTASE"/>
</dbReference>
<dbReference type="SUPFAM" id="SSF51306">
    <property type="entry name" value="LexA/Signal peptidase"/>
    <property type="match status" value="1"/>
</dbReference>
<dbReference type="PROSITE" id="PS00501">
    <property type="entry name" value="SPASE_I_1"/>
    <property type="match status" value="1"/>
</dbReference>
<dbReference type="PROSITE" id="PS00760">
    <property type="entry name" value="SPASE_I_2"/>
    <property type="match status" value="1"/>
</dbReference>
<dbReference type="PROSITE" id="PS00761">
    <property type="entry name" value="SPASE_I_3"/>
    <property type="match status" value="1"/>
</dbReference>
<organism>
    <name type="scientific">Staphylococcus aureus (strain COL)</name>
    <dbReference type="NCBI Taxonomy" id="93062"/>
    <lineage>
        <taxon>Bacteria</taxon>
        <taxon>Bacillati</taxon>
        <taxon>Bacillota</taxon>
        <taxon>Bacilli</taxon>
        <taxon>Bacillales</taxon>
        <taxon>Staphylococcaceae</taxon>
        <taxon>Staphylococcus</taxon>
    </lineage>
</organism>
<keyword id="KW-0002">3D-structure</keyword>
<keyword id="KW-1003">Cell membrane</keyword>
<keyword id="KW-0378">Hydrolase</keyword>
<keyword id="KW-0472">Membrane</keyword>
<keyword id="KW-0645">Protease</keyword>
<keyword id="KW-0812">Transmembrane</keyword>
<keyword id="KW-1133">Transmembrane helix</keyword>
<evidence type="ECO:0000250" key="1"/>
<evidence type="ECO:0000255" key="2"/>
<evidence type="ECO:0000305" key="3"/>
<evidence type="ECO:0007829" key="4">
    <source>
        <dbReference type="PDB" id="4WVG"/>
    </source>
</evidence>
<evidence type="ECO:0007829" key="5">
    <source>
        <dbReference type="PDB" id="4WVI"/>
    </source>
</evidence>
<comment type="function">
    <text evidence="1">Essential for cell viability.</text>
</comment>
<comment type="catalytic activity">
    <reaction>
        <text>Cleavage of hydrophobic, N-terminal signal or leader sequences from secreted and periplasmic proteins.</text>
        <dbReference type="EC" id="3.4.21.89"/>
    </reaction>
</comment>
<comment type="subcellular location">
    <subcellularLocation>
        <location evidence="3">Cell membrane</location>
        <topology evidence="3">Single-pass type II membrane protein</topology>
    </subcellularLocation>
</comment>
<comment type="similarity">
    <text evidence="3">Belongs to the peptidase S26 family.</text>
</comment>
<comment type="sequence caution" evidence="3">
    <conflict type="erroneous initiation">
        <sequence resource="EMBL-CDS" id="AAW37937"/>
    </conflict>
</comment>
<sequence>MKKEILEWIISIAVAFVILFIVGKFIVTPYTIKGESMDPTLKDGERVAVNIVGYKTGGLEKGNVVVFHANKNDDYVKRVIGVPGDKVEYKNDTLYVNGKKQDEPYLNYNLKHKQGDYITGTFQVKDLPNANPKSNVIPKGKYLVLGDNREVSKDSRAFGLIDEDQIVGKVSFRFWPFSEFKHNFNPENTKN</sequence>
<name>LEP_STAAC</name>
<protein>
    <recommendedName>
        <fullName>Signal peptidase IB</fullName>
        <shortName>SPase IB</shortName>
        <ecNumber>3.4.21.89</ecNumber>
    </recommendedName>
    <alternativeName>
        <fullName>Leader peptidase IB</fullName>
    </alternativeName>
</protein>
<gene>
    <name type="primary">spsB</name>
    <name type="ordered locus">SACOL0969</name>
</gene>
<feature type="chain" id="PRO_0000109526" description="Signal peptidase IB">
    <location>
        <begin position="1"/>
        <end position="191"/>
    </location>
</feature>
<feature type="topological domain" description="Cytoplasmic" evidence="2">
    <location>
        <begin position="1"/>
        <end position="7"/>
    </location>
</feature>
<feature type="transmembrane region" description="Helical" evidence="2">
    <location>
        <begin position="8"/>
        <end position="28"/>
    </location>
</feature>
<feature type="topological domain" description="Extracellular" evidence="2">
    <location>
        <begin position="29"/>
        <end position="191"/>
    </location>
</feature>
<feature type="active site" evidence="1">
    <location>
        <position position="36"/>
    </location>
</feature>
<feature type="active site" evidence="1">
    <location>
        <position position="77"/>
    </location>
</feature>
<feature type="strand" evidence="5">
    <location>
        <begin position="27"/>
        <end position="35"/>
    </location>
</feature>
<feature type="turn" evidence="5">
    <location>
        <begin position="36"/>
        <end position="40"/>
    </location>
</feature>
<feature type="strand" evidence="5">
    <location>
        <begin position="46"/>
        <end position="51"/>
    </location>
</feature>
<feature type="strand" evidence="5">
    <location>
        <begin position="64"/>
        <end position="72"/>
    </location>
</feature>
<feature type="strand" evidence="5">
    <location>
        <begin position="74"/>
        <end position="81"/>
    </location>
</feature>
<feature type="strand" evidence="5">
    <location>
        <begin position="86"/>
        <end position="90"/>
    </location>
</feature>
<feature type="strand" evidence="5">
    <location>
        <begin position="93"/>
        <end position="96"/>
    </location>
</feature>
<feature type="strand" evidence="5">
    <location>
        <begin position="99"/>
        <end position="101"/>
    </location>
</feature>
<feature type="helix" evidence="5">
    <location>
        <begin position="104"/>
        <end position="106"/>
    </location>
</feature>
<feature type="helix" evidence="5">
    <location>
        <begin position="107"/>
        <end position="110"/>
    </location>
</feature>
<feature type="strand" evidence="5">
    <location>
        <begin position="114"/>
        <end position="116"/>
    </location>
</feature>
<feature type="strand" evidence="4">
    <location>
        <begin position="121"/>
        <end position="123"/>
    </location>
</feature>
<feature type="helix" evidence="5">
    <location>
        <begin position="124"/>
        <end position="126"/>
    </location>
</feature>
<feature type="strand" evidence="5">
    <location>
        <begin position="141"/>
        <end position="145"/>
    </location>
</feature>
<feature type="turn" evidence="5">
    <location>
        <begin position="149"/>
        <end position="151"/>
    </location>
</feature>
<feature type="helix" evidence="5">
    <location>
        <begin position="155"/>
        <end position="158"/>
    </location>
</feature>
<feature type="helix" evidence="5">
    <location>
        <begin position="163"/>
        <end position="165"/>
    </location>
</feature>
<feature type="strand" evidence="5">
    <location>
        <begin position="166"/>
        <end position="170"/>
    </location>
</feature>
<reference key="1">
    <citation type="journal article" date="2005" name="J. Bacteriol.">
        <title>Insights on evolution of virulence and resistance from the complete genome analysis of an early methicillin-resistant Staphylococcus aureus strain and a biofilm-producing methicillin-resistant Staphylococcus epidermidis strain.</title>
        <authorList>
            <person name="Gill S.R."/>
            <person name="Fouts D.E."/>
            <person name="Archer G.L."/>
            <person name="Mongodin E.F."/>
            <person name="DeBoy R.T."/>
            <person name="Ravel J."/>
            <person name="Paulsen I.T."/>
            <person name="Kolonay J.F."/>
            <person name="Brinkac L.M."/>
            <person name="Beanan M.J."/>
            <person name="Dodson R.J."/>
            <person name="Daugherty S.C."/>
            <person name="Madupu R."/>
            <person name="Angiuoli S.V."/>
            <person name="Durkin A.S."/>
            <person name="Haft D.H."/>
            <person name="Vamathevan J.J."/>
            <person name="Khouri H."/>
            <person name="Utterback T.R."/>
            <person name="Lee C."/>
            <person name="Dimitrov G."/>
            <person name="Jiang L."/>
            <person name="Qin H."/>
            <person name="Weidman J."/>
            <person name="Tran K."/>
            <person name="Kang K.H."/>
            <person name="Hance I.R."/>
            <person name="Nelson K.E."/>
            <person name="Fraser C.M."/>
        </authorList>
    </citation>
    <scope>NUCLEOTIDE SEQUENCE [LARGE SCALE GENOMIC DNA]</scope>
    <source>
        <strain>COL</strain>
    </source>
</reference>